<evidence type="ECO:0000255" key="1">
    <source>
        <dbReference type="HAMAP-Rule" id="MF_00123"/>
    </source>
</evidence>
<gene>
    <name evidence="1" type="primary">argS</name>
    <name type="ordered locus">Mmar10_2213</name>
</gene>
<reference key="1">
    <citation type="submission" date="2006-08" db="EMBL/GenBank/DDBJ databases">
        <title>Complete sequence of Maricaulis maris MCS10.</title>
        <authorList>
            <consortium name="US DOE Joint Genome Institute"/>
            <person name="Copeland A."/>
            <person name="Lucas S."/>
            <person name="Lapidus A."/>
            <person name="Barry K."/>
            <person name="Detter J.C."/>
            <person name="Glavina del Rio T."/>
            <person name="Hammon N."/>
            <person name="Israni S."/>
            <person name="Dalin E."/>
            <person name="Tice H."/>
            <person name="Pitluck S."/>
            <person name="Saunders E."/>
            <person name="Brettin T."/>
            <person name="Bruce D."/>
            <person name="Han C."/>
            <person name="Tapia R."/>
            <person name="Gilna P."/>
            <person name="Schmutz J."/>
            <person name="Larimer F."/>
            <person name="Land M."/>
            <person name="Hauser L."/>
            <person name="Kyrpides N."/>
            <person name="Mikhailova N."/>
            <person name="Viollier P."/>
            <person name="Stephens C."/>
            <person name="Richardson P."/>
        </authorList>
    </citation>
    <scope>NUCLEOTIDE SEQUENCE [LARGE SCALE GENOMIC DNA]</scope>
    <source>
        <strain>MCS10</strain>
    </source>
</reference>
<protein>
    <recommendedName>
        <fullName evidence="1">Arginine--tRNA ligase</fullName>
        <ecNumber evidence="1">6.1.1.19</ecNumber>
    </recommendedName>
    <alternativeName>
        <fullName evidence="1">Arginyl-tRNA synthetase</fullName>
        <shortName evidence="1">ArgRS</shortName>
    </alternativeName>
</protein>
<feature type="chain" id="PRO_1000018056" description="Arginine--tRNA ligase">
    <location>
        <begin position="1"/>
        <end position="588"/>
    </location>
</feature>
<feature type="short sequence motif" description="'HIGH' region">
    <location>
        <begin position="124"/>
        <end position="134"/>
    </location>
</feature>
<dbReference type="EC" id="6.1.1.19" evidence="1"/>
<dbReference type="EMBL" id="CP000449">
    <property type="protein sequence ID" value="ABI66505.1"/>
    <property type="molecule type" value="Genomic_DNA"/>
</dbReference>
<dbReference type="RefSeq" id="WP_011644150.1">
    <property type="nucleotide sequence ID" value="NC_008347.1"/>
</dbReference>
<dbReference type="SMR" id="Q0AMI8"/>
<dbReference type="STRING" id="394221.Mmar10_2213"/>
<dbReference type="KEGG" id="mmr:Mmar10_2213"/>
<dbReference type="eggNOG" id="COG0018">
    <property type="taxonomic scope" value="Bacteria"/>
</dbReference>
<dbReference type="HOGENOM" id="CLU_006406_5_1_5"/>
<dbReference type="OrthoDB" id="9803211at2"/>
<dbReference type="Proteomes" id="UP000001964">
    <property type="component" value="Chromosome"/>
</dbReference>
<dbReference type="GO" id="GO:0005737">
    <property type="term" value="C:cytoplasm"/>
    <property type="evidence" value="ECO:0007669"/>
    <property type="project" value="UniProtKB-SubCell"/>
</dbReference>
<dbReference type="GO" id="GO:0004814">
    <property type="term" value="F:arginine-tRNA ligase activity"/>
    <property type="evidence" value="ECO:0007669"/>
    <property type="project" value="UniProtKB-UniRule"/>
</dbReference>
<dbReference type="GO" id="GO:0005524">
    <property type="term" value="F:ATP binding"/>
    <property type="evidence" value="ECO:0007669"/>
    <property type="project" value="UniProtKB-UniRule"/>
</dbReference>
<dbReference type="GO" id="GO:0006420">
    <property type="term" value="P:arginyl-tRNA aminoacylation"/>
    <property type="evidence" value="ECO:0007669"/>
    <property type="project" value="UniProtKB-UniRule"/>
</dbReference>
<dbReference type="CDD" id="cd00671">
    <property type="entry name" value="ArgRS_core"/>
    <property type="match status" value="1"/>
</dbReference>
<dbReference type="Gene3D" id="3.30.1360.70">
    <property type="entry name" value="Arginyl tRNA synthetase N-terminal domain"/>
    <property type="match status" value="1"/>
</dbReference>
<dbReference type="Gene3D" id="3.40.50.620">
    <property type="entry name" value="HUPs"/>
    <property type="match status" value="1"/>
</dbReference>
<dbReference type="Gene3D" id="1.10.730.10">
    <property type="entry name" value="Isoleucyl-tRNA Synthetase, Domain 1"/>
    <property type="match status" value="1"/>
</dbReference>
<dbReference type="HAMAP" id="MF_00123">
    <property type="entry name" value="Arg_tRNA_synth"/>
    <property type="match status" value="1"/>
</dbReference>
<dbReference type="InterPro" id="IPR001412">
    <property type="entry name" value="aa-tRNA-synth_I_CS"/>
</dbReference>
<dbReference type="InterPro" id="IPR001278">
    <property type="entry name" value="Arg-tRNA-ligase"/>
</dbReference>
<dbReference type="InterPro" id="IPR005148">
    <property type="entry name" value="Arg-tRNA-synth_N"/>
</dbReference>
<dbReference type="InterPro" id="IPR036695">
    <property type="entry name" value="Arg-tRNA-synth_N_sf"/>
</dbReference>
<dbReference type="InterPro" id="IPR035684">
    <property type="entry name" value="ArgRS_core"/>
</dbReference>
<dbReference type="InterPro" id="IPR008909">
    <property type="entry name" value="DALR_anticod-bd"/>
</dbReference>
<dbReference type="InterPro" id="IPR014729">
    <property type="entry name" value="Rossmann-like_a/b/a_fold"/>
</dbReference>
<dbReference type="InterPro" id="IPR009080">
    <property type="entry name" value="tRNAsynth_Ia_anticodon-bd"/>
</dbReference>
<dbReference type="NCBIfam" id="TIGR00456">
    <property type="entry name" value="argS"/>
    <property type="match status" value="1"/>
</dbReference>
<dbReference type="PANTHER" id="PTHR11956:SF5">
    <property type="entry name" value="ARGININE--TRNA LIGASE, CYTOPLASMIC"/>
    <property type="match status" value="1"/>
</dbReference>
<dbReference type="PANTHER" id="PTHR11956">
    <property type="entry name" value="ARGINYL-TRNA SYNTHETASE"/>
    <property type="match status" value="1"/>
</dbReference>
<dbReference type="Pfam" id="PF03485">
    <property type="entry name" value="Arg_tRNA_synt_N"/>
    <property type="match status" value="1"/>
</dbReference>
<dbReference type="Pfam" id="PF05746">
    <property type="entry name" value="DALR_1"/>
    <property type="match status" value="1"/>
</dbReference>
<dbReference type="Pfam" id="PF00750">
    <property type="entry name" value="tRNA-synt_1d"/>
    <property type="match status" value="1"/>
</dbReference>
<dbReference type="PRINTS" id="PR01038">
    <property type="entry name" value="TRNASYNTHARG"/>
</dbReference>
<dbReference type="SMART" id="SM01016">
    <property type="entry name" value="Arg_tRNA_synt_N"/>
    <property type="match status" value="1"/>
</dbReference>
<dbReference type="SMART" id="SM00836">
    <property type="entry name" value="DALR_1"/>
    <property type="match status" value="1"/>
</dbReference>
<dbReference type="SUPFAM" id="SSF47323">
    <property type="entry name" value="Anticodon-binding domain of a subclass of class I aminoacyl-tRNA synthetases"/>
    <property type="match status" value="1"/>
</dbReference>
<dbReference type="SUPFAM" id="SSF55190">
    <property type="entry name" value="Arginyl-tRNA synthetase (ArgRS), N-terminal 'additional' domain"/>
    <property type="match status" value="1"/>
</dbReference>
<dbReference type="SUPFAM" id="SSF52374">
    <property type="entry name" value="Nucleotidylyl transferase"/>
    <property type="match status" value="1"/>
</dbReference>
<dbReference type="PROSITE" id="PS00178">
    <property type="entry name" value="AA_TRNA_LIGASE_I"/>
    <property type="match status" value="1"/>
</dbReference>
<comment type="catalytic activity">
    <reaction evidence="1">
        <text>tRNA(Arg) + L-arginine + ATP = L-arginyl-tRNA(Arg) + AMP + diphosphate</text>
        <dbReference type="Rhea" id="RHEA:20301"/>
        <dbReference type="Rhea" id="RHEA-COMP:9658"/>
        <dbReference type="Rhea" id="RHEA-COMP:9673"/>
        <dbReference type="ChEBI" id="CHEBI:30616"/>
        <dbReference type="ChEBI" id="CHEBI:32682"/>
        <dbReference type="ChEBI" id="CHEBI:33019"/>
        <dbReference type="ChEBI" id="CHEBI:78442"/>
        <dbReference type="ChEBI" id="CHEBI:78513"/>
        <dbReference type="ChEBI" id="CHEBI:456215"/>
        <dbReference type="EC" id="6.1.1.19"/>
    </reaction>
</comment>
<comment type="subunit">
    <text evidence="1">Monomer.</text>
</comment>
<comment type="subcellular location">
    <subcellularLocation>
        <location evidence="1">Cytoplasm</location>
    </subcellularLocation>
</comment>
<comment type="similarity">
    <text evidence="1">Belongs to the class-I aminoacyl-tRNA synthetase family.</text>
</comment>
<keyword id="KW-0030">Aminoacyl-tRNA synthetase</keyword>
<keyword id="KW-0067">ATP-binding</keyword>
<keyword id="KW-0963">Cytoplasm</keyword>
<keyword id="KW-0436">Ligase</keyword>
<keyword id="KW-0547">Nucleotide-binding</keyword>
<keyword id="KW-0648">Protein biosynthesis</keyword>
<keyword id="KW-1185">Reference proteome</keyword>
<proteinExistence type="inferred from homology"/>
<name>SYR_MARMM</name>
<accession>Q0AMI8</accession>
<sequence>MPSIADQLSAVLGDAFASLELPRELGRVSPSKQKPEVFPFQCNGAMPAAKQAKTNPRELAAKLIEALHGIPQIGAAEIAGPGFINLRPAEHLYGERAAEIAGDDRAGAPLAAAPRTVMIDFGGPNVAKPMHVGHLRSSVLGDSLQRLFRFRGDTVVSDIHLGDWGLQMGHLITELHEEQPDLVYFDAAITDGYPSEPPVTIEDLARLYPQASVKAKAGPERLEISRSATAELQAGRPGYRALLRHFIDVSVAALKRDFGALGVHFDLWKGESDVDPLIPGLVEDFKARGVAEESEGALIVRVARDGDKKELAPLILVSKTGAALYGTTDLATILDRKQSVDPDLTLYVVDLAQGDHFEQVFRAAEKAGLAEEGALEHVKFGTVNGTDGKRLRTRDGGTFRLADLIASAIERADERLKEAGLAADVSAEEHARVARMVGLAAIKFADLQNYRTTNYVFDLDRFTSFEGKTGPYLLYAAVRVKSLMRRAAEAGVTPGEILVDAQEERDLVLCLDAFGAALDNAADNRAPNALCDHAFTLAQAFSKFYSACPVLVAEDDAVKASRLALAEATLKQLELCLGLLGLEAPERM</sequence>
<organism>
    <name type="scientific">Maricaulis maris (strain MCS10)</name>
    <name type="common">Caulobacter maris</name>
    <dbReference type="NCBI Taxonomy" id="394221"/>
    <lineage>
        <taxon>Bacteria</taxon>
        <taxon>Pseudomonadati</taxon>
        <taxon>Pseudomonadota</taxon>
        <taxon>Alphaproteobacteria</taxon>
        <taxon>Maricaulales</taxon>
        <taxon>Maricaulaceae</taxon>
        <taxon>Maricaulis</taxon>
    </lineage>
</organism>